<keyword id="KW-1185">Reference proteome</keyword>
<keyword id="KW-0687">Ribonucleoprotein</keyword>
<keyword id="KW-0689">Ribosomal protein</keyword>
<keyword id="KW-0694">RNA-binding</keyword>
<keyword id="KW-0699">rRNA-binding</keyword>
<dbReference type="EMBL" id="CP001043">
    <property type="protein sequence ID" value="ACC71996.1"/>
    <property type="molecule type" value="Genomic_DNA"/>
</dbReference>
<dbReference type="RefSeq" id="WP_012402185.1">
    <property type="nucleotide sequence ID" value="NC_010622.1"/>
</dbReference>
<dbReference type="SMR" id="B2JI50"/>
<dbReference type="STRING" id="391038.Bphy_2824"/>
<dbReference type="KEGG" id="bph:Bphy_2824"/>
<dbReference type="eggNOG" id="COG0097">
    <property type="taxonomic scope" value="Bacteria"/>
</dbReference>
<dbReference type="HOGENOM" id="CLU_065464_1_2_4"/>
<dbReference type="OrthoDB" id="9805007at2"/>
<dbReference type="Proteomes" id="UP000001192">
    <property type="component" value="Chromosome 1"/>
</dbReference>
<dbReference type="GO" id="GO:0022625">
    <property type="term" value="C:cytosolic large ribosomal subunit"/>
    <property type="evidence" value="ECO:0007669"/>
    <property type="project" value="TreeGrafter"/>
</dbReference>
<dbReference type="GO" id="GO:0019843">
    <property type="term" value="F:rRNA binding"/>
    <property type="evidence" value="ECO:0007669"/>
    <property type="project" value="UniProtKB-UniRule"/>
</dbReference>
<dbReference type="GO" id="GO:0003735">
    <property type="term" value="F:structural constituent of ribosome"/>
    <property type="evidence" value="ECO:0007669"/>
    <property type="project" value="InterPro"/>
</dbReference>
<dbReference type="GO" id="GO:0002181">
    <property type="term" value="P:cytoplasmic translation"/>
    <property type="evidence" value="ECO:0007669"/>
    <property type="project" value="TreeGrafter"/>
</dbReference>
<dbReference type="FunFam" id="3.90.930.12:FF:000001">
    <property type="entry name" value="50S ribosomal protein L6"/>
    <property type="match status" value="1"/>
</dbReference>
<dbReference type="Gene3D" id="3.90.930.12">
    <property type="entry name" value="Ribosomal protein L6, alpha-beta domain"/>
    <property type="match status" value="2"/>
</dbReference>
<dbReference type="HAMAP" id="MF_01365_B">
    <property type="entry name" value="Ribosomal_uL6_B"/>
    <property type="match status" value="1"/>
</dbReference>
<dbReference type="InterPro" id="IPR000702">
    <property type="entry name" value="Ribosomal_uL6-like"/>
</dbReference>
<dbReference type="InterPro" id="IPR036789">
    <property type="entry name" value="Ribosomal_uL6-like_a/b-dom_sf"/>
</dbReference>
<dbReference type="InterPro" id="IPR020040">
    <property type="entry name" value="Ribosomal_uL6_a/b-dom"/>
</dbReference>
<dbReference type="InterPro" id="IPR019906">
    <property type="entry name" value="Ribosomal_uL6_bac-type"/>
</dbReference>
<dbReference type="InterPro" id="IPR002358">
    <property type="entry name" value="Ribosomal_uL6_CS"/>
</dbReference>
<dbReference type="NCBIfam" id="TIGR03654">
    <property type="entry name" value="L6_bact"/>
    <property type="match status" value="1"/>
</dbReference>
<dbReference type="PANTHER" id="PTHR11655">
    <property type="entry name" value="60S/50S RIBOSOMAL PROTEIN L6/L9"/>
    <property type="match status" value="1"/>
</dbReference>
<dbReference type="PANTHER" id="PTHR11655:SF14">
    <property type="entry name" value="LARGE RIBOSOMAL SUBUNIT PROTEIN UL6M"/>
    <property type="match status" value="1"/>
</dbReference>
<dbReference type="Pfam" id="PF00347">
    <property type="entry name" value="Ribosomal_L6"/>
    <property type="match status" value="2"/>
</dbReference>
<dbReference type="PIRSF" id="PIRSF002162">
    <property type="entry name" value="Ribosomal_L6"/>
    <property type="match status" value="1"/>
</dbReference>
<dbReference type="PRINTS" id="PR00059">
    <property type="entry name" value="RIBOSOMALL6"/>
</dbReference>
<dbReference type="SUPFAM" id="SSF56053">
    <property type="entry name" value="Ribosomal protein L6"/>
    <property type="match status" value="2"/>
</dbReference>
<dbReference type="PROSITE" id="PS00525">
    <property type="entry name" value="RIBOSOMAL_L6_1"/>
    <property type="match status" value="1"/>
</dbReference>
<proteinExistence type="inferred from homology"/>
<gene>
    <name evidence="1" type="primary">rplF</name>
    <name type="ordered locus">Bphy_2824</name>
</gene>
<protein>
    <recommendedName>
        <fullName evidence="1">Large ribosomal subunit protein uL6</fullName>
    </recommendedName>
    <alternativeName>
        <fullName evidence="2">50S ribosomal protein L6</fullName>
    </alternativeName>
</protein>
<comment type="function">
    <text evidence="1">This protein binds to the 23S rRNA, and is important in its secondary structure. It is located near the subunit interface in the base of the L7/L12 stalk, and near the tRNA binding site of the peptidyltransferase center.</text>
</comment>
<comment type="subunit">
    <text evidence="1">Part of the 50S ribosomal subunit.</text>
</comment>
<comment type="similarity">
    <text evidence="1">Belongs to the universal ribosomal protein uL6 family.</text>
</comment>
<accession>B2JI50</accession>
<reference key="1">
    <citation type="journal article" date="2014" name="Stand. Genomic Sci.">
        <title>Complete genome sequence of Burkholderia phymatum STM815(T), a broad host range and efficient nitrogen-fixing symbiont of Mimosa species.</title>
        <authorList>
            <person name="Moulin L."/>
            <person name="Klonowska A."/>
            <person name="Caroline B."/>
            <person name="Booth K."/>
            <person name="Vriezen J.A."/>
            <person name="Melkonian R."/>
            <person name="James E.K."/>
            <person name="Young J.P."/>
            <person name="Bena G."/>
            <person name="Hauser L."/>
            <person name="Land M."/>
            <person name="Kyrpides N."/>
            <person name="Bruce D."/>
            <person name="Chain P."/>
            <person name="Copeland A."/>
            <person name="Pitluck S."/>
            <person name="Woyke T."/>
            <person name="Lizotte-Waniewski M."/>
            <person name="Bristow J."/>
            <person name="Riley M."/>
        </authorList>
    </citation>
    <scope>NUCLEOTIDE SEQUENCE [LARGE SCALE GENOMIC DNA]</scope>
    <source>
        <strain>DSM 17167 / CIP 108236 / LMG 21445 / STM815</strain>
    </source>
</reference>
<feature type="chain" id="PRO_1000143955" description="Large ribosomal subunit protein uL6">
    <location>
        <begin position="1"/>
        <end position="176"/>
    </location>
</feature>
<evidence type="ECO:0000255" key="1">
    <source>
        <dbReference type="HAMAP-Rule" id="MF_01365"/>
    </source>
</evidence>
<evidence type="ECO:0000305" key="2"/>
<sequence>MSRVGKSPIALQGAEVALSDERITVKGPLGSISQNANRLVKVVNDNGTLKFEPADESREANAMSGTMRALVANMVHGVTKGFERKLTLVGVGYRAQAQGDKLNLSLGFSHPVVHQMPEGVKAETPSQTEIVIKGIDKQKVGQVAAEVRGYRPPEPYKGKGVRYANEVVILKETKKK</sequence>
<organism>
    <name type="scientific">Paraburkholderia phymatum (strain DSM 17167 / CIP 108236 / LMG 21445 / STM815)</name>
    <name type="common">Burkholderia phymatum</name>
    <dbReference type="NCBI Taxonomy" id="391038"/>
    <lineage>
        <taxon>Bacteria</taxon>
        <taxon>Pseudomonadati</taxon>
        <taxon>Pseudomonadota</taxon>
        <taxon>Betaproteobacteria</taxon>
        <taxon>Burkholderiales</taxon>
        <taxon>Burkholderiaceae</taxon>
        <taxon>Paraburkholderia</taxon>
    </lineage>
</organism>
<name>RL6_PARP8</name>